<sequence length="275" mass="29508">MSQQLQQIIDNAWENRAELSPKAASAEIREAVAHAIEQLDRGALRVAEKIDGAWTVHQWLKKAVLLSFRLEDNAPMPAGGYSQFYDKVPSKFANYTAEDFAAGGFRVVPPAIARRGSFIAKNVVLMPSYTNIGAYVDEGTMVDTWATVGSCAQIGKNVHLSGGVGIGGVLEPLQANPVIIEDNCFIGARSEVVEGVIVEENSVISMGVYLGQSTKIYDRETGEVTYGRIPAGSVVVAGNLPAKDGTHSLYCAVIVKKVDAKTRAKVGLNELLRGD</sequence>
<accession>A3NAW0</accession>
<protein>
    <recommendedName>
        <fullName evidence="1">2,3,4,5-tetrahydropyridine-2,6-dicarboxylate N-succinyltransferase</fullName>
        <ecNumber evidence="1">2.3.1.117</ecNumber>
    </recommendedName>
    <alternativeName>
        <fullName evidence="1">Tetrahydrodipicolinate N-succinyltransferase</fullName>
        <shortName evidence="1">THDP succinyltransferase</shortName>
        <shortName evidence="1">THP succinyltransferase</shortName>
        <shortName evidence="1">Tetrahydropicolinate succinylase</shortName>
    </alternativeName>
</protein>
<reference key="1">
    <citation type="journal article" date="2010" name="Genome Biol. Evol.">
        <title>Continuing evolution of Burkholderia mallei through genome reduction and large-scale rearrangements.</title>
        <authorList>
            <person name="Losada L."/>
            <person name="Ronning C.M."/>
            <person name="DeShazer D."/>
            <person name="Woods D."/>
            <person name="Fedorova N."/>
            <person name="Kim H.S."/>
            <person name="Shabalina S.A."/>
            <person name="Pearson T.R."/>
            <person name="Brinkac L."/>
            <person name="Tan P."/>
            <person name="Nandi T."/>
            <person name="Crabtree J."/>
            <person name="Badger J."/>
            <person name="Beckstrom-Sternberg S."/>
            <person name="Saqib M."/>
            <person name="Schutzer S.E."/>
            <person name="Keim P."/>
            <person name="Nierman W.C."/>
        </authorList>
    </citation>
    <scope>NUCLEOTIDE SEQUENCE [LARGE SCALE GENOMIC DNA]</scope>
    <source>
        <strain>668</strain>
    </source>
</reference>
<feature type="chain" id="PRO_1000047131" description="2,3,4,5-tetrahydropyridine-2,6-dicarboxylate N-succinyltransferase">
    <location>
        <begin position="1"/>
        <end position="275"/>
    </location>
</feature>
<feature type="binding site" evidence="1">
    <location>
        <position position="106"/>
    </location>
    <ligand>
        <name>substrate</name>
    </ligand>
</feature>
<feature type="binding site" evidence="1">
    <location>
        <position position="143"/>
    </location>
    <ligand>
        <name>substrate</name>
    </ligand>
</feature>
<keyword id="KW-0012">Acyltransferase</keyword>
<keyword id="KW-0028">Amino-acid biosynthesis</keyword>
<keyword id="KW-0963">Cytoplasm</keyword>
<keyword id="KW-0220">Diaminopimelate biosynthesis</keyword>
<keyword id="KW-0457">Lysine biosynthesis</keyword>
<keyword id="KW-0677">Repeat</keyword>
<keyword id="KW-0808">Transferase</keyword>
<organism>
    <name type="scientific">Burkholderia pseudomallei (strain 668)</name>
    <dbReference type="NCBI Taxonomy" id="320373"/>
    <lineage>
        <taxon>Bacteria</taxon>
        <taxon>Pseudomonadati</taxon>
        <taxon>Pseudomonadota</taxon>
        <taxon>Betaproteobacteria</taxon>
        <taxon>Burkholderiales</taxon>
        <taxon>Burkholderiaceae</taxon>
        <taxon>Burkholderia</taxon>
        <taxon>pseudomallei group</taxon>
    </lineage>
</organism>
<comment type="catalytic activity">
    <reaction evidence="1">
        <text>(S)-2,3,4,5-tetrahydrodipicolinate + succinyl-CoA + H2O = (S)-2-succinylamino-6-oxoheptanedioate + CoA</text>
        <dbReference type="Rhea" id="RHEA:17325"/>
        <dbReference type="ChEBI" id="CHEBI:15377"/>
        <dbReference type="ChEBI" id="CHEBI:15685"/>
        <dbReference type="ChEBI" id="CHEBI:16845"/>
        <dbReference type="ChEBI" id="CHEBI:57287"/>
        <dbReference type="ChEBI" id="CHEBI:57292"/>
        <dbReference type="EC" id="2.3.1.117"/>
    </reaction>
</comment>
<comment type="pathway">
    <text evidence="1">Amino-acid biosynthesis; L-lysine biosynthesis via DAP pathway; LL-2,6-diaminopimelate from (S)-tetrahydrodipicolinate (succinylase route): step 1/3.</text>
</comment>
<comment type="subunit">
    <text evidence="1">Homotrimer.</text>
</comment>
<comment type="subcellular location">
    <subcellularLocation>
        <location evidence="1">Cytoplasm</location>
    </subcellularLocation>
</comment>
<comment type="similarity">
    <text evidence="1">Belongs to the transferase hexapeptide repeat family.</text>
</comment>
<evidence type="ECO:0000255" key="1">
    <source>
        <dbReference type="HAMAP-Rule" id="MF_00811"/>
    </source>
</evidence>
<gene>
    <name evidence="1" type="primary">dapD</name>
    <name type="ordered locus">BURPS668_2449</name>
</gene>
<proteinExistence type="inferred from homology"/>
<name>DAPD_BURP6</name>
<dbReference type="EC" id="2.3.1.117" evidence="1"/>
<dbReference type="EMBL" id="CP000570">
    <property type="protein sequence ID" value="ABN81721.1"/>
    <property type="molecule type" value="Genomic_DNA"/>
</dbReference>
<dbReference type="RefSeq" id="WP_004191680.1">
    <property type="nucleotide sequence ID" value="NC_009074.1"/>
</dbReference>
<dbReference type="SMR" id="A3NAW0"/>
<dbReference type="GeneID" id="92979291"/>
<dbReference type="KEGG" id="bpd:BURPS668_2449"/>
<dbReference type="HOGENOM" id="CLU_050859_0_1_4"/>
<dbReference type="UniPathway" id="UPA00034">
    <property type="reaction ID" value="UER00019"/>
</dbReference>
<dbReference type="GO" id="GO:0005737">
    <property type="term" value="C:cytoplasm"/>
    <property type="evidence" value="ECO:0007669"/>
    <property type="project" value="UniProtKB-SubCell"/>
</dbReference>
<dbReference type="GO" id="GO:0008666">
    <property type="term" value="F:2,3,4,5-tetrahydropyridine-2,6-dicarboxylate N-succinyltransferase activity"/>
    <property type="evidence" value="ECO:0007669"/>
    <property type="project" value="UniProtKB-UniRule"/>
</dbReference>
<dbReference type="GO" id="GO:0016779">
    <property type="term" value="F:nucleotidyltransferase activity"/>
    <property type="evidence" value="ECO:0007669"/>
    <property type="project" value="TreeGrafter"/>
</dbReference>
<dbReference type="GO" id="GO:0019877">
    <property type="term" value="P:diaminopimelate biosynthetic process"/>
    <property type="evidence" value="ECO:0007669"/>
    <property type="project" value="UniProtKB-UniRule"/>
</dbReference>
<dbReference type="GO" id="GO:0009089">
    <property type="term" value="P:lysine biosynthetic process via diaminopimelate"/>
    <property type="evidence" value="ECO:0007669"/>
    <property type="project" value="UniProtKB-UniRule"/>
</dbReference>
<dbReference type="CDD" id="cd03350">
    <property type="entry name" value="LbH_THP_succinylT"/>
    <property type="match status" value="1"/>
</dbReference>
<dbReference type="Gene3D" id="2.160.10.10">
    <property type="entry name" value="Hexapeptide repeat proteins"/>
    <property type="match status" value="1"/>
</dbReference>
<dbReference type="Gene3D" id="1.10.166.10">
    <property type="entry name" value="Tetrahydrodipicolinate-N-succinyltransferase, N-terminal domain"/>
    <property type="match status" value="1"/>
</dbReference>
<dbReference type="HAMAP" id="MF_00811">
    <property type="entry name" value="DapD"/>
    <property type="match status" value="1"/>
</dbReference>
<dbReference type="InterPro" id="IPR005664">
    <property type="entry name" value="DapD_Trfase_Hexpep_rpt_fam"/>
</dbReference>
<dbReference type="InterPro" id="IPR001451">
    <property type="entry name" value="Hexapep"/>
</dbReference>
<dbReference type="InterPro" id="IPR018357">
    <property type="entry name" value="Hexapep_transf_CS"/>
</dbReference>
<dbReference type="InterPro" id="IPR023180">
    <property type="entry name" value="THP_succinylTrfase_dom1"/>
</dbReference>
<dbReference type="InterPro" id="IPR037133">
    <property type="entry name" value="THP_succinylTrfase_N_sf"/>
</dbReference>
<dbReference type="InterPro" id="IPR011004">
    <property type="entry name" value="Trimer_LpxA-like_sf"/>
</dbReference>
<dbReference type="NCBIfam" id="TIGR00965">
    <property type="entry name" value="dapD"/>
    <property type="match status" value="1"/>
</dbReference>
<dbReference type="NCBIfam" id="NF008808">
    <property type="entry name" value="PRK11830.1"/>
    <property type="match status" value="1"/>
</dbReference>
<dbReference type="PANTHER" id="PTHR19136:SF52">
    <property type="entry name" value="2,3,4,5-TETRAHYDROPYRIDINE-2,6-DICARBOXYLATE N-SUCCINYLTRANSFERASE"/>
    <property type="match status" value="1"/>
</dbReference>
<dbReference type="PANTHER" id="PTHR19136">
    <property type="entry name" value="MOLYBDENUM COFACTOR GUANYLYLTRANSFERASE"/>
    <property type="match status" value="1"/>
</dbReference>
<dbReference type="Pfam" id="PF14602">
    <property type="entry name" value="Hexapep_2"/>
    <property type="match status" value="1"/>
</dbReference>
<dbReference type="Pfam" id="PF14805">
    <property type="entry name" value="THDPS_N_2"/>
    <property type="match status" value="1"/>
</dbReference>
<dbReference type="SUPFAM" id="SSF51161">
    <property type="entry name" value="Trimeric LpxA-like enzymes"/>
    <property type="match status" value="1"/>
</dbReference>
<dbReference type="PROSITE" id="PS00101">
    <property type="entry name" value="HEXAPEP_TRANSFERASES"/>
    <property type="match status" value="1"/>
</dbReference>